<reference key="1">
    <citation type="journal article" date="2001" name="Science">
        <title>The genome of the natural genetic engineer Agrobacterium tumefaciens C58.</title>
        <authorList>
            <person name="Wood D.W."/>
            <person name="Setubal J.C."/>
            <person name="Kaul R."/>
            <person name="Monks D.E."/>
            <person name="Kitajima J.P."/>
            <person name="Okura V.K."/>
            <person name="Zhou Y."/>
            <person name="Chen L."/>
            <person name="Wood G.E."/>
            <person name="Almeida N.F. Jr."/>
            <person name="Woo L."/>
            <person name="Chen Y."/>
            <person name="Paulsen I.T."/>
            <person name="Eisen J.A."/>
            <person name="Karp P.D."/>
            <person name="Bovee D. Sr."/>
            <person name="Chapman P."/>
            <person name="Clendenning J."/>
            <person name="Deatherage G."/>
            <person name="Gillet W."/>
            <person name="Grant C."/>
            <person name="Kutyavin T."/>
            <person name="Levy R."/>
            <person name="Li M.-J."/>
            <person name="McClelland E."/>
            <person name="Palmieri A."/>
            <person name="Raymond C."/>
            <person name="Rouse G."/>
            <person name="Saenphimmachak C."/>
            <person name="Wu Z."/>
            <person name="Romero P."/>
            <person name="Gordon D."/>
            <person name="Zhang S."/>
            <person name="Yoo H."/>
            <person name="Tao Y."/>
            <person name="Biddle P."/>
            <person name="Jung M."/>
            <person name="Krespan W."/>
            <person name="Perry M."/>
            <person name="Gordon-Kamm B."/>
            <person name="Liao L."/>
            <person name="Kim S."/>
            <person name="Hendrick C."/>
            <person name="Zhao Z.-Y."/>
            <person name="Dolan M."/>
            <person name="Chumley F."/>
            <person name="Tingey S.V."/>
            <person name="Tomb J.-F."/>
            <person name="Gordon M.P."/>
            <person name="Olson M.V."/>
            <person name="Nester E.W."/>
        </authorList>
    </citation>
    <scope>NUCLEOTIDE SEQUENCE [LARGE SCALE GENOMIC DNA]</scope>
    <source>
        <strain>C58 / ATCC 33970</strain>
    </source>
</reference>
<reference key="2">
    <citation type="journal article" date="2001" name="Science">
        <title>Genome sequence of the plant pathogen and biotechnology agent Agrobacterium tumefaciens C58.</title>
        <authorList>
            <person name="Goodner B."/>
            <person name="Hinkle G."/>
            <person name="Gattung S."/>
            <person name="Miller N."/>
            <person name="Blanchard M."/>
            <person name="Qurollo B."/>
            <person name="Goldman B.S."/>
            <person name="Cao Y."/>
            <person name="Askenazi M."/>
            <person name="Halling C."/>
            <person name="Mullin L."/>
            <person name="Houmiel K."/>
            <person name="Gordon J."/>
            <person name="Vaudin M."/>
            <person name="Iartchouk O."/>
            <person name="Epp A."/>
            <person name="Liu F."/>
            <person name="Wollam C."/>
            <person name="Allinger M."/>
            <person name="Doughty D."/>
            <person name="Scott C."/>
            <person name="Lappas C."/>
            <person name="Markelz B."/>
            <person name="Flanagan C."/>
            <person name="Crowell C."/>
            <person name="Gurson J."/>
            <person name="Lomo C."/>
            <person name="Sear C."/>
            <person name="Strub G."/>
            <person name="Cielo C."/>
            <person name="Slater S."/>
        </authorList>
    </citation>
    <scope>NUCLEOTIDE SEQUENCE [LARGE SCALE GENOMIC DNA]</scope>
    <source>
        <strain>C58 / ATCC 33970</strain>
    </source>
</reference>
<keyword id="KW-0963">Cytoplasm</keyword>
<keyword id="KW-0210">Decarboxylase</keyword>
<keyword id="KW-0456">Lyase</keyword>
<keyword id="KW-0627">Porphyrin biosynthesis</keyword>
<keyword id="KW-1185">Reference proteome</keyword>
<evidence type="ECO:0000255" key="1">
    <source>
        <dbReference type="HAMAP-Rule" id="MF_00218"/>
    </source>
</evidence>
<organism>
    <name type="scientific">Agrobacterium fabrum (strain C58 / ATCC 33970)</name>
    <name type="common">Agrobacterium tumefaciens (strain C58)</name>
    <dbReference type="NCBI Taxonomy" id="176299"/>
    <lineage>
        <taxon>Bacteria</taxon>
        <taxon>Pseudomonadati</taxon>
        <taxon>Pseudomonadota</taxon>
        <taxon>Alphaproteobacteria</taxon>
        <taxon>Hyphomicrobiales</taxon>
        <taxon>Rhizobiaceae</taxon>
        <taxon>Rhizobium/Agrobacterium group</taxon>
        <taxon>Agrobacterium</taxon>
        <taxon>Agrobacterium tumefaciens complex</taxon>
    </lineage>
</organism>
<name>DCUP_AGRFC</name>
<sequence length="344" mass="37174">MSERKVMTVLNGKTVTPPPIWLMRQAGRYLPEYRETRKSAGSFLDLCYNPELASEVTLQPIRRFGLDAAILFSDILVIPDALHRNVSFSEGKGPAMDPIDISGIEKLDASDVMAHLSPVFETVSRLRTSLPDETTLLGFCGAPWTVATYMIAGHGTPDQAPARLFGYQEPAAMEKLLALLAEVSADYLVAQIDAGADAVQIFDSWAGVLGEKEFEEYAIKPVARIIASVRARRPSAKIIAFAKGAGYLLRDYRRKTGANAIGLDWSVPLSFARDLQKEGPVQGNLDPMLMVAGGKALQDGIDAVLQSLGQGPLIFNLGHGITPQADPENVTRLVQRVRSVGGAG</sequence>
<proteinExistence type="inferred from homology"/>
<comment type="function">
    <text evidence="1">Catalyzes the decarboxylation of four acetate groups of uroporphyrinogen-III to yield coproporphyrinogen-III.</text>
</comment>
<comment type="catalytic activity">
    <reaction evidence="1">
        <text>uroporphyrinogen III + 4 H(+) = coproporphyrinogen III + 4 CO2</text>
        <dbReference type="Rhea" id="RHEA:19865"/>
        <dbReference type="ChEBI" id="CHEBI:15378"/>
        <dbReference type="ChEBI" id="CHEBI:16526"/>
        <dbReference type="ChEBI" id="CHEBI:57308"/>
        <dbReference type="ChEBI" id="CHEBI:57309"/>
        <dbReference type="EC" id="4.1.1.37"/>
    </reaction>
</comment>
<comment type="pathway">
    <text evidence="1">Porphyrin-containing compound metabolism; protoporphyrin-IX biosynthesis; coproporphyrinogen-III from 5-aminolevulinate: step 4/4.</text>
</comment>
<comment type="subunit">
    <text evidence="1">Homodimer.</text>
</comment>
<comment type="subcellular location">
    <subcellularLocation>
        <location evidence="1">Cytoplasm</location>
    </subcellularLocation>
</comment>
<comment type="similarity">
    <text evidence="1">Belongs to the uroporphyrinogen decarboxylase family.</text>
</comment>
<gene>
    <name evidence="1" type="primary">hemE</name>
    <name type="ordered locus">Atu2835</name>
    <name type="ORF">AGR_C_5140</name>
</gene>
<feature type="chain" id="PRO_0000187578" description="Uroporphyrinogen decarboxylase">
    <location>
        <begin position="1"/>
        <end position="344"/>
    </location>
</feature>
<feature type="binding site" evidence="1">
    <location>
        <begin position="24"/>
        <end position="28"/>
    </location>
    <ligand>
        <name>substrate</name>
    </ligand>
</feature>
<feature type="binding site" evidence="1">
    <location>
        <position position="43"/>
    </location>
    <ligand>
        <name>substrate</name>
    </ligand>
</feature>
<feature type="binding site" evidence="1">
    <location>
        <position position="74"/>
    </location>
    <ligand>
        <name>substrate</name>
    </ligand>
</feature>
<feature type="binding site" evidence="1">
    <location>
        <position position="149"/>
    </location>
    <ligand>
        <name>substrate</name>
    </ligand>
</feature>
<feature type="binding site" evidence="1">
    <location>
        <position position="204"/>
    </location>
    <ligand>
        <name>substrate</name>
    </ligand>
</feature>
<feature type="binding site" evidence="1">
    <location>
        <position position="319"/>
    </location>
    <ligand>
        <name>substrate</name>
    </ligand>
</feature>
<feature type="site" description="Transition state stabilizer" evidence="1">
    <location>
        <position position="74"/>
    </location>
</feature>
<accession>Q8UBL6</accession>
<protein>
    <recommendedName>
        <fullName evidence="1">Uroporphyrinogen decarboxylase</fullName>
        <shortName evidence="1">UPD</shortName>
        <shortName evidence="1">URO-D</shortName>
        <ecNumber evidence="1">4.1.1.37</ecNumber>
    </recommendedName>
</protein>
<dbReference type="EC" id="4.1.1.37" evidence="1"/>
<dbReference type="EMBL" id="AE007869">
    <property type="protein sequence ID" value="AAK88546.1"/>
    <property type="molecule type" value="Genomic_DNA"/>
</dbReference>
<dbReference type="PIR" id="A97699">
    <property type="entry name" value="A97699"/>
</dbReference>
<dbReference type="PIR" id="AB2925">
    <property type="entry name" value="AB2925"/>
</dbReference>
<dbReference type="RefSeq" id="NP_355761.1">
    <property type="nucleotide sequence ID" value="NC_003062.2"/>
</dbReference>
<dbReference type="RefSeq" id="WP_010972601.1">
    <property type="nucleotide sequence ID" value="NC_003062.2"/>
</dbReference>
<dbReference type="SMR" id="Q8UBL6"/>
<dbReference type="STRING" id="176299.Atu2835"/>
<dbReference type="EnsemblBacteria" id="AAK88546">
    <property type="protein sequence ID" value="AAK88546"/>
    <property type="gene ID" value="Atu2835"/>
</dbReference>
<dbReference type="GeneID" id="1134873"/>
<dbReference type="KEGG" id="atu:Atu2835"/>
<dbReference type="PATRIC" id="fig|176299.10.peg.2844"/>
<dbReference type="eggNOG" id="COG0407">
    <property type="taxonomic scope" value="Bacteria"/>
</dbReference>
<dbReference type="HOGENOM" id="CLU_040933_0_0_5"/>
<dbReference type="OrthoDB" id="9806656at2"/>
<dbReference type="PhylomeDB" id="Q8UBL6"/>
<dbReference type="BioCyc" id="AGRO:ATU2835-MONOMER"/>
<dbReference type="UniPathway" id="UPA00251">
    <property type="reaction ID" value="UER00321"/>
</dbReference>
<dbReference type="Proteomes" id="UP000000813">
    <property type="component" value="Chromosome circular"/>
</dbReference>
<dbReference type="GO" id="GO:0005829">
    <property type="term" value="C:cytosol"/>
    <property type="evidence" value="ECO:0007669"/>
    <property type="project" value="TreeGrafter"/>
</dbReference>
<dbReference type="GO" id="GO:0004853">
    <property type="term" value="F:uroporphyrinogen decarboxylase activity"/>
    <property type="evidence" value="ECO:0007669"/>
    <property type="project" value="UniProtKB-UniRule"/>
</dbReference>
<dbReference type="GO" id="GO:0019353">
    <property type="term" value="P:protoporphyrinogen IX biosynthetic process from glutamate"/>
    <property type="evidence" value="ECO:0007669"/>
    <property type="project" value="TreeGrafter"/>
</dbReference>
<dbReference type="CDD" id="cd00717">
    <property type="entry name" value="URO-D"/>
    <property type="match status" value="1"/>
</dbReference>
<dbReference type="FunFam" id="3.20.20.210:FF:000007">
    <property type="entry name" value="Uroporphyrinogen decarboxylase"/>
    <property type="match status" value="1"/>
</dbReference>
<dbReference type="Gene3D" id="3.20.20.210">
    <property type="match status" value="1"/>
</dbReference>
<dbReference type="HAMAP" id="MF_00218">
    <property type="entry name" value="URO_D"/>
    <property type="match status" value="1"/>
</dbReference>
<dbReference type="InterPro" id="IPR038071">
    <property type="entry name" value="UROD/MetE-like_sf"/>
</dbReference>
<dbReference type="InterPro" id="IPR006361">
    <property type="entry name" value="Uroporphyrinogen_deCO2ase_HemE"/>
</dbReference>
<dbReference type="InterPro" id="IPR000257">
    <property type="entry name" value="Uroporphyrinogen_deCOase"/>
</dbReference>
<dbReference type="NCBIfam" id="TIGR01464">
    <property type="entry name" value="hemE"/>
    <property type="match status" value="1"/>
</dbReference>
<dbReference type="PANTHER" id="PTHR21091">
    <property type="entry name" value="METHYLTETRAHYDROFOLATE:HOMOCYSTEINE METHYLTRANSFERASE RELATED"/>
    <property type="match status" value="1"/>
</dbReference>
<dbReference type="PANTHER" id="PTHR21091:SF169">
    <property type="entry name" value="UROPORPHYRINOGEN DECARBOXYLASE"/>
    <property type="match status" value="1"/>
</dbReference>
<dbReference type="Pfam" id="PF01208">
    <property type="entry name" value="URO-D"/>
    <property type="match status" value="1"/>
</dbReference>
<dbReference type="SUPFAM" id="SSF51726">
    <property type="entry name" value="UROD/MetE-like"/>
    <property type="match status" value="1"/>
</dbReference>
<dbReference type="PROSITE" id="PS00906">
    <property type="entry name" value="UROD_1"/>
    <property type="match status" value="1"/>
</dbReference>
<dbReference type="PROSITE" id="PS00907">
    <property type="entry name" value="UROD_2"/>
    <property type="match status" value="1"/>
</dbReference>